<keyword id="KW-0687">Ribonucleoprotein</keyword>
<keyword id="KW-0689">Ribosomal protein</keyword>
<keyword id="KW-0694">RNA-binding</keyword>
<keyword id="KW-0699">rRNA-binding</keyword>
<proteinExistence type="inferred from homology"/>
<protein>
    <recommendedName>
        <fullName evidence="1">Large ribosomal subunit protein uL4</fullName>
    </recommendedName>
    <alternativeName>
        <fullName evidence="3">50S ribosomal protein L4</fullName>
    </alternativeName>
</protein>
<name>RL4_FRATN</name>
<gene>
    <name evidence="1" type="primary">rplD</name>
    <name type="ordered locus">FTN_0240</name>
</gene>
<accession>A0Q4I4</accession>
<evidence type="ECO:0000255" key="1">
    <source>
        <dbReference type="HAMAP-Rule" id="MF_01328"/>
    </source>
</evidence>
<evidence type="ECO:0000256" key="2">
    <source>
        <dbReference type="SAM" id="MobiDB-lite"/>
    </source>
</evidence>
<evidence type="ECO:0000305" key="3"/>
<organism>
    <name type="scientific">Francisella tularensis subsp. novicida (strain U112)</name>
    <dbReference type="NCBI Taxonomy" id="401614"/>
    <lineage>
        <taxon>Bacteria</taxon>
        <taxon>Pseudomonadati</taxon>
        <taxon>Pseudomonadota</taxon>
        <taxon>Gammaproteobacteria</taxon>
        <taxon>Thiotrichales</taxon>
        <taxon>Francisellaceae</taxon>
        <taxon>Francisella</taxon>
    </lineage>
</organism>
<dbReference type="EMBL" id="CP000439">
    <property type="protein sequence ID" value="ABK89149.1"/>
    <property type="molecule type" value="Genomic_DNA"/>
</dbReference>
<dbReference type="RefSeq" id="WP_003021600.1">
    <property type="nucleotide sequence ID" value="NZ_CP009633.1"/>
</dbReference>
<dbReference type="SMR" id="A0Q4I4"/>
<dbReference type="GeneID" id="75264260"/>
<dbReference type="KEGG" id="ftn:FTN_0240"/>
<dbReference type="KEGG" id="ftx:AW25_1802"/>
<dbReference type="BioCyc" id="FTUL401614:G1G75-251-MONOMER"/>
<dbReference type="Proteomes" id="UP000000762">
    <property type="component" value="Chromosome"/>
</dbReference>
<dbReference type="GO" id="GO:1990904">
    <property type="term" value="C:ribonucleoprotein complex"/>
    <property type="evidence" value="ECO:0007669"/>
    <property type="project" value="UniProtKB-KW"/>
</dbReference>
<dbReference type="GO" id="GO:0005840">
    <property type="term" value="C:ribosome"/>
    <property type="evidence" value="ECO:0007669"/>
    <property type="project" value="UniProtKB-KW"/>
</dbReference>
<dbReference type="GO" id="GO:0019843">
    <property type="term" value="F:rRNA binding"/>
    <property type="evidence" value="ECO:0007669"/>
    <property type="project" value="UniProtKB-UniRule"/>
</dbReference>
<dbReference type="GO" id="GO:0003735">
    <property type="term" value="F:structural constituent of ribosome"/>
    <property type="evidence" value="ECO:0007669"/>
    <property type="project" value="InterPro"/>
</dbReference>
<dbReference type="GO" id="GO:0006412">
    <property type="term" value="P:translation"/>
    <property type="evidence" value="ECO:0007669"/>
    <property type="project" value="UniProtKB-UniRule"/>
</dbReference>
<dbReference type="Gene3D" id="3.40.1370.10">
    <property type="match status" value="1"/>
</dbReference>
<dbReference type="HAMAP" id="MF_01328_B">
    <property type="entry name" value="Ribosomal_uL4_B"/>
    <property type="match status" value="1"/>
</dbReference>
<dbReference type="InterPro" id="IPR002136">
    <property type="entry name" value="Ribosomal_uL4"/>
</dbReference>
<dbReference type="InterPro" id="IPR013005">
    <property type="entry name" value="Ribosomal_uL4-like"/>
</dbReference>
<dbReference type="InterPro" id="IPR023574">
    <property type="entry name" value="Ribosomal_uL4_dom_sf"/>
</dbReference>
<dbReference type="NCBIfam" id="TIGR03953">
    <property type="entry name" value="rplD_bact"/>
    <property type="match status" value="1"/>
</dbReference>
<dbReference type="PANTHER" id="PTHR10746">
    <property type="entry name" value="50S RIBOSOMAL PROTEIN L4"/>
    <property type="match status" value="1"/>
</dbReference>
<dbReference type="PANTHER" id="PTHR10746:SF6">
    <property type="entry name" value="LARGE RIBOSOMAL SUBUNIT PROTEIN UL4M"/>
    <property type="match status" value="1"/>
</dbReference>
<dbReference type="Pfam" id="PF00573">
    <property type="entry name" value="Ribosomal_L4"/>
    <property type="match status" value="1"/>
</dbReference>
<dbReference type="SUPFAM" id="SSF52166">
    <property type="entry name" value="Ribosomal protein L4"/>
    <property type="match status" value="1"/>
</dbReference>
<reference key="1">
    <citation type="journal article" date="2007" name="Genome Biol.">
        <title>Comparison of Francisella tularensis genomes reveals evolutionary events associated with the emergence of human pathogenic strains.</title>
        <authorList>
            <person name="Rohmer L."/>
            <person name="Fong C."/>
            <person name="Abmayr S."/>
            <person name="Wasnick M."/>
            <person name="Larson Freeman T.J."/>
            <person name="Radey M."/>
            <person name="Guina T."/>
            <person name="Svensson K."/>
            <person name="Hayden H.S."/>
            <person name="Jacobs M."/>
            <person name="Gallagher L.A."/>
            <person name="Manoil C."/>
            <person name="Ernst R.K."/>
            <person name="Drees B."/>
            <person name="Buckley D."/>
            <person name="Haugen E."/>
            <person name="Bovee D."/>
            <person name="Zhou Y."/>
            <person name="Chang J."/>
            <person name="Levy R."/>
            <person name="Lim R."/>
            <person name="Gillett W."/>
            <person name="Guenthener D."/>
            <person name="Kang A."/>
            <person name="Shaffer S.A."/>
            <person name="Taylor G."/>
            <person name="Chen J."/>
            <person name="Gallis B."/>
            <person name="D'Argenio D.A."/>
            <person name="Forsman M."/>
            <person name="Olson M.V."/>
            <person name="Goodlett D.R."/>
            <person name="Kaul R."/>
            <person name="Miller S.I."/>
            <person name="Brittnacher M.J."/>
        </authorList>
    </citation>
    <scope>NUCLEOTIDE SEQUENCE [LARGE SCALE GENOMIC DNA]</scope>
    <source>
        <strain>U112</strain>
    </source>
</reference>
<comment type="function">
    <text evidence="1">One of the primary rRNA binding proteins, this protein initially binds near the 5'-end of the 23S rRNA. It is important during the early stages of 50S assembly. It makes multiple contacts with different domains of the 23S rRNA in the assembled 50S subunit and ribosome.</text>
</comment>
<comment type="function">
    <text evidence="1">Forms part of the polypeptide exit tunnel.</text>
</comment>
<comment type="subunit">
    <text evidence="1">Part of the 50S ribosomal subunit.</text>
</comment>
<comment type="similarity">
    <text evidence="1">Belongs to the universal ribosomal protein uL4 family.</text>
</comment>
<feature type="chain" id="PRO_1000052403" description="Large ribosomal subunit protein uL4">
    <location>
        <begin position="1"/>
        <end position="207"/>
    </location>
</feature>
<feature type="region of interest" description="Disordered" evidence="2">
    <location>
        <begin position="48"/>
        <end position="70"/>
    </location>
</feature>
<sequence length="207" mass="22553">MDLNIKSLAGQEAGSLGVAEGVFAADYNEALIHQVVVAYMAGARQGTKAQKTRSEVSGGGAKPWRQKGTGRARAGTIRSPIFRKGGVTFAAKPKSYKQKVNRKMYSGAVKSILSELLRSGRMTIVEELKLETPKTREFKSVIDSLGVKDVLFVVGVEEFSENLYLSSRNLKNVAVCDSVEINPVSLVCFENVVLTKKAIKEIEEKLV</sequence>